<sequence>MAYSYTEKKRIRKDFSKLPDVMDVPYLLAIQLDSYREFLQAGATKDQFRDVGLHAAFKSVFPIISYSGNAALEYVGYRLGEPAFDVKECVLRGVTFAVPLRVKVRLIIFDKESSNKAIKDIKEQEVYMGEIPLMTENGTFVINGTERVIVSQLHRSPGVFFDHDRGKTHSSGKLLYSARIIPYRGSWLDFEFDPKDCVFVRIDRRRKLPASVLLRALGYTTEEVLDAFYTTNVFHVKGEGLSLELVPQRLRGEVAVLDIQDDKGKVIVEQGRRITARHINQLEKAGIKELDVPLDYVLGRTTAKAIVHPATGEILAECNTELSTEILAKIAKAGVVRIETLYTNDIDCGPFVSDTLKIDSTSNQLEALVEIYRMMRPGEPPTKDAAETLFNNLFFSPERYDLSAVGRMKFNRRIGRTEIEGSGVLCKEDIVAVLKTLVDIRNGKGIVDDIDHLGNRRVRCVGEMAENQFRVGLVRVERAVKERLSMAESEGLMPQDLINAKPVAAAVKEFFGSSQLSQFMDQNNPLSEITHKRRVSALGPGGLTRERAGFEVRDVHPTHYGRVCPIETPEGPNIGLINSLAAYARTNQYGFLESPYRVVKEGVVTDDIVFLSAIEEADHVIAQASATMNEQKVLIDELVAVRHLNEFTVKAPEDVTLMDVSPKQVVSVAASLIPFLEHDDANRALMGSNMQRQAVPTLRADKPLVGTGMERNVARDSGVCVVARRGGVIDSVDASRIVVRVADDEVETGEAGVDIYNLTKYTRSNQNTCINQRPLVSKGDRVQRSDIMADGPSTDMGELALGQNMRIAFMAWNGFNFEDSICLSERVVQEDRFTTIHIQELTCVARDTKLGPEEITADIPNVGEAALNKLDEAGIVYVGAEVGAGDILVGKVTPKGETQLTPEEKLLRAIFGEKASDVKDTSLRVPTGTKGTVIDVQVFTRDGVERDARALSIEKSQLDEIRKDLNEEFRIVEGATFERLRSALVGHKAEGGAGLKKGQDITDEVLDGLEHGQWFKLRMAEDALNEQLEKAQAYIVDRRRLLDDKFEDKKRKLQQGDDLAPGVLKIVKVYLAIRRRIQPGDKMAGRHGNKGVVSVIMPVEDMPHDANGTPVDVVLNPLGVPSRMNVGQILETHLGLAAKGLGEKINRMVEEQRKVAELRTFLDEIYNQIGGRNEDLDSFSDQEILDLAKNLRGGVPMATPVFDGAKESEIKAMLKLADLPESGQMQLTDGRTGNKFERPVTVGYMYMLKLNHLVDDKMHARSTGSYSLVTQQPLGGKAQFGGQRFGEMEVWALEAYGAAYTLQEMLTVKSDDVNGRTKMYKNIVDGDHRMEPGMPESFNVLIKEIRSLGIDIDLETE</sequence>
<organism>
    <name type="scientific">Pseudomonas fluorescens (strain Pf0-1)</name>
    <dbReference type="NCBI Taxonomy" id="205922"/>
    <lineage>
        <taxon>Bacteria</taxon>
        <taxon>Pseudomonadati</taxon>
        <taxon>Pseudomonadota</taxon>
        <taxon>Gammaproteobacteria</taxon>
        <taxon>Pseudomonadales</taxon>
        <taxon>Pseudomonadaceae</taxon>
        <taxon>Pseudomonas</taxon>
    </lineage>
</organism>
<protein>
    <recommendedName>
        <fullName evidence="1">DNA-directed RNA polymerase subunit beta</fullName>
        <shortName evidence="1">RNAP subunit beta</shortName>
        <ecNumber evidence="1">2.7.7.6</ecNumber>
    </recommendedName>
    <alternativeName>
        <fullName evidence="1">RNA polymerase subunit beta</fullName>
    </alternativeName>
    <alternativeName>
        <fullName evidence="1">Transcriptase subunit beta</fullName>
    </alternativeName>
</protein>
<reference key="1">
    <citation type="journal article" date="2009" name="Genome Biol.">
        <title>Genomic and genetic analyses of diversity and plant interactions of Pseudomonas fluorescens.</title>
        <authorList>
            <person name="Silby M.W."/>
            <person name="Cerdeno-Tarraga A.M."/>
            <person name="Vernikos G.S."/>
            <person name="Giddens S.R."/>
            <person name="Jackson R.W."/>
            <person name="Preston G.M."/>
            <person name="Zhang X.-X."/>
            <person name="Moon C.D."/>
            <person name="Gehrig S.M."/>
            <person name="Godfrey S.A.C."/>
            <person name="Knight C.G."/>
            <person name="Malone J.G."/>
            <person name="Robinson Z."/>
            <person name="Spiers A.J."/>
            <person name="Harris S."/>
            <person name="Challis G.L."/>
            <person name="Yaxley A.M."/>
            <person name="Harris D."/>
            <person name="Seeger K."/>
            <person name="Murphy L."/>
            <person name="Rutter S."/>
            <person name="Squares R."/>
            <person name="Quail M.A."/>
            <person name="Saunders E."/>
            <person name="Mavromatis K."/>
            <person name="Brettin T.S."/>
            <person name="Bentley S.D."/>
            <person name="Hothersall J."/>
            <person name="Stephens E."/>
            <person name="Thomas C.M."/>
            <person name="Parkhill J."/>
            <person name="Levy S.B."/>
            <person name="Rainey P.B."/>
            <person name="Thomson N.R."/>
        </authorList>
    </citation>
    <scope>NUCLEOTIDE SEQUENCE [LARGE SCALE GENOMIC DNA]</scope>
    <source>
        <strain>Pf0-1</strain>
    </source>
</reference>
<evidence type="ECO:0000255" key="1">
    <source>
        <dbReference type="HAMAP-Rule" id="MF_01321"/>
    </source>
</evidence>
<accession>Q3K5Y1</accession>
<comment type="function">
    <text evidence="1">DNA-dependent RNA polymerase catalyzes the transcription of DNA into RNA using the four ribonucleoside triphosphates as substrates.</text>
</comment>
<comment type="catalytic activity">
    <reaction evidence="1">
        <text>RNA(n) + a ribonucleoside 5'-triphosphate = RNA(n+1) + diphosphate</text>
        <dbReference type="Rhea" id="RHEA:21248"/>
        <dbReference type="Rhea" id="RHEA-COMP:14527"/>
        <dbReference type="Rhea" id="RHEA-COMP:17342"/>
        <dbReference type="ChEBI" id="CHEBI:33019"/>
        <dbReference type="ChEBI" id="CHEBI:61557"/>
        <dbReference type="ChEBI" id="CHEBI:140395"/>
        <dbReference type="EC" id="2.7.7.6"/>
    </reaction>
</comment>
<comment type="subunit">
    <text evidence="1">The RNAP catalytic core consists of 2 alpha, 1 beta, 1 beta' and 1 omega subunit. When a sigma factor is associated with the core the holoenzyme is formed, which can initiate transcription.</text>
</comment>
<comment type="similarity">
    <text evidence="1">Belongs to the RNA polymerase beta chain family.</text>
</comment>
<name>RPOB_PSEPF</name>
<keyword id="KW-0240">DNA-directed RNA polymerase</keyword>
<keyword id="KW-0548">Nucleotidyltransferase</keyword>
<keyword id="KW-0804">Transcription</keyword>
<keyword id="KW-0808">Transferase</keyword>
<feature type="chain" id="PRO_0000224095" description="DNA-directed RNA polymerase subunit beta">
    <location>
        <begin position="1"/>
        <end position="1357"/>
    </location>
</feature>
<proteinExistence type="inferred from homology"/>
<dbReference type="EC" id="2.7.7.6" evidence="1"/>
<dbReference type="EMBL" id="CP000094">
    <property type="protein sequence ID" value="ABA76823.1"/>
    <property type="molecule type" value="Genomic_DNA"/>
</dbReference>
<dbReference type="RefSeq" id="WP_007957595.1">
    <property type="nucleotide sequence ID" value="NC_007492.2"/>
</dbReference>
<dbReference type="SMR" id="Q3K5Y1"/>
<dbReference type="KEGG" id="pfo:Pfl01_5086"/>
<dbReference type="eggNOG" id="COG0085">
    <property type="taxonomic scope" value="Bacteria"/>
</dbReference>
<dbReference type="HOGENOM" id="CLU_000524_4_0_6"/>
<dbReference type="Proteomes" id="UP000002704">
    <property type="component" value="Chromosome"/>
</dbReference>
<dbReference type="GO" id="GO:0000428">
    <property type="term" value="C:DNA-directed RNA polymerase complex"/>
    <property type="evidence" value="ECO:0007669"/>
    <property type="project" value="UniProtKB-KW"/>
</dbReference>
<dbReference type="GO" id="GO:0003677">
    <property type="term" value="F:DNA binding"/>
    <property type="evidence" value="ECO:0007669"/>
    <property type="project" value="UniProtKB-UniRule"/>
</dbReference>
<dbReference type="GO" id="GO:0003899">
    <property type="term" value="F:DNA-directed RNA polymerase activity"/>
    <property type="evidence" value="ECO:0007669"/>
    <property type="project" value="UniProtKB-UniRule"/>
</dbReference>
<dbReference type="GO" id="GO:0032549">
    <property type="term" value="F:ribonucleoside binding"/>
    <property type="evidence" value="ECO:0007669"/>
    <property type="project" value="InterPro"/>
</dbReference>
<dbReference type="GO" id="GO:0006351">
    <property type="term" value="P:DNA-templated transcription"/>
    <property type="evidence" value="ECO:0007669"/>
    <property type="project" value="UniProtKB-UniRule"/>
</dbReference>
<dbReference type="CDD" id="cd00653">
    <property type="entry name" value="RNA_pol_B_RPB2"/>
    <property type="match status" value="1"/>
</dbReference>
<dbReference type="FunFam" id="2.40.50.100:FF:000006">
    <property type="entry name" value="DNA-directed RNA polymerase subunit beta"/>
    <property type="match status" value="1"/>
</dbReference>
<dbReference type="FunFam" id="2.40.50.150:FF:000001">
    <property type="entry name" value="DNA-directed RNA polymerase subunit beta"/>
    <property type="match status" value="1"/>
</dbReference>
<dbReference type="FunFam" id="3.90.1110.10:FF:000001">
    <property type="entry name" value="DNA-directed RNA polymerase subunit beta"/>
    <property type="match status" value="1"/>
</dbReference>
<dbReference type="FunFam" id="3.90.1110.10:FF:000004">
    <property type="entry name" value="DNA-directed RNA polymerase subunit beta"/>
    <property type="match status" value="1"/>
</dbReference>
<dbReference type="FunFam" id="3.90.1800.10:FF:000001">
    <property type="entry name" value="DNA-directed RNA polymerase subunit beta"/>
    <property type="match status" value="1"/>
</dbReference>
<dbReference type="Gene3D" id="2.40.50.100">
    <property type="match status" value="1"/>
</dbReference>
<dbReference type="Gene3D" id="2.40.50.150">
    <property type="match status" value="1"/>
</dbReference>
<dbReference type="Gene3D" id="3.90.1100.10">
    <property type="match status" value="2"/>
</dbReference>
<dbReference type="Gene3D" id="6.10.140.1670">
    <property type="match status" value="1"/>
</dbReference>
<dbReference type="Gene3D" id="2.30.150.10">
    <property type="entry name" value="DNA-directed RNA polymerase, beta subunit, external 1 domain"/>
    <property type="match status" value="1"/>
</dbReference>
<dbReference type="Gene3D" id="2.40.270.10">
    <property type="entry name" value="DNA-directed RNA polymerase, subunit 2, domain 6"/>
    <property type="match status" value="2"/>
</dbReference>
<dbReference type="Gene3D" id="3.90.1800.10">
    <property type="entry name" value="RNA polymerase alpha subunit dimerisation domain"/>
    <property type="match status" value="1"/>
</dbReference>
<dbReference type="Gene3D" id="3.90.1110.10">
    <property type="entry name" value="RNA polymerase Rpb2, domain 2"/>
    <property type="match status" value="2"/>
</dbReference>
<dbReference type="HAMAP" id="MF_01321">
    <property type="entry name" value="RNApol_bact_RpoB"/>
    <property type="match status" value="1"/>
</dbReference>
<dbReference type="InterPro" id="IPR042107">
    <property type="entry name" value="DNA-dir_RNA_pol_bsu_ext_1_sf"/>
</dbReference>
<dbReference type="InterPro" id="IPR019462">
    <property type="entry name" value="DNA-dir_RNA_pol_bsu_external_1"/>
</dbReference>
<dbReference type="InterPro" id="IPR015712">
    <property type="entry name" value="DNA-dir_RNA_pol_su2"/>
</dbReference>
<dbReference type="InterPro" id="IPR007120">
    <property type="entry name" value="DNA-dir_RNAP_su2_dom"/>
</dbReference>
<dbReference type="InterPro" id="IPR037033">
    <property type="entry name" value="DNA-dir_RNAP_su2_hyb_sf"/>
</dbReference>
<dbReference type="InterPro" id="IPR010243">
    <property type="entry name" value="RNA_pol_bsu_bac"/>
</dbReference>
<dbReference type="InterPro" id="IPR007121">
    <property type="entry name" value="RNA_pol_bsu_CS"/>
</dbReference>
<dbReference type="InterPro" id="IPR007644">
    <property type="entry name" value="RNA_pol_bsu_protrusion"/>
</dbReference>
<dbReference type="InterPro" id="IPR007642">
    <property type="entry name" value="RNA_pol_Rpb2_2"/>
</dbReference>
<dbReference type="InterPro" id="IPR037034">
    <property type="entry name" value="RNA_pol_Rpb2_2_sf"/>
</dbReference>
<dbReference type="InterPro" id="IPR007645">
    <property type="entry name" value="RNA_pol_Rpb2_3"/>
</dbReference>
<dbReference type="InterPro" id="IPR007641">
    <property type="entry name" value="RNA_pol_Rpb2_7"/>
</dbReference>
<dbReference type="InterPro" id="IPR014724">
    <property type="entry name" value="RNA_pol_RPB2_OB-fold"/>
</dbReference>
<dbReference type="NCBIfam" id="NF001616">
    <property type="entry name" value="PRK00405.1"/>
    <property type="match status" value="1"/>
</dbReference>
<dbReference type="NCBIfam" id="TIGR02013">
    <property type="entry name" value="rpoB"/>
    <property type="match status" value="1"/>
</dbReference>
<dbReference type="PANTHER" id="PTHR20856">
    <property type="entry name" value="DNA-DIRECTED RNA POLYMERASE I SUBUNIT 2"/>
    <property type="match status" value="1"/>
</dbReference>
<dbReference type="Pfam" id="PF04563">
    <property type="entry name" value="RNA_pol_Rpb2_1"/>
    <property type="match status" value="1"/>
</dbReference>
<dbReference type="Pfam" id="PF04561">
    <property type="entry name" value="RNA_pol_Rpb2_2"/>
    <property type="match status" value="2"/>
</dbReference>
<dbReference type="Pfam" id="PF04565">
    <property type="entry name" value="RNA_pol_Rpb2_3"/>
    <property type="match status" value="1"/>
</dbReference>
<dbReference type="Pfam" id="PF10385">
    <property type="entry name" value="RNA_pol_Rpb2_45"/>
    <property type="match status" value="1"/>
</dbReference>
<dbReference type="Pfam" id="PF00562">
    <property type="entry name" value="RNA_pol_Rpb2_6"/>
    <property type="match status" value="1"/>
</dbReference>
<dbReference type="Pfam" id="PF04560">
    <property type="entry name" value="RNA_pol_Rpb2_7"/>
    <property type="match status" value="1"/>
</dbReference>
<dbReference type="SUPFAM" id="SSF64484">
    <property type="entry name" value="beta and beta-prime subunits of DNA dependent RNA-polymerase"/>
    <property type="match status" value="1"/>
</dbReference>
<dbReference type="PROSITE" id="PS01166">
    <property type="entry name" value="RNA_POL_BETA"/>
    <property type="match status" value="1"/>
</dbReference>
<gene>
    <name evidence="1" type="primary">rpoB</name>
    <name type="ordered locus">Pfl01_5086</name>
</gene>